<evidence type="ECO:0000255" key="1">
    <source>
        <dbReference type="HAMAP-Rule" id="MF_00435"/>
    </source>
</evidence>
<evidence type="ECO:0000255" key="2">
    <source>
        <dbReference type="PROSITE-ProRule" id="PRU01197"/>
    </source>
</evidence>
<evidence type="ECO:0000255" key="3">
    <source>
        <dbReference type="PROSITE-ProRule" id="PRU01198"/>
    </source>
</evidence>
<comment type="function">
    <text evidence="1">Involved in the biosynthesis of branched-chain amino acids (BCAA). Catalyzes an alkyl-migration followed by a ketol-acid reduction of (S)-2-acetolactate (S2AL) to yield (R)-2,3-dihydroxy-isovalerate. In the isomerase reaction, S2AL is rearranged via a Mg-dependent methyl migration to produce 3-hydroxy-3-methyl-2-ketobutyrate (HMKB). In the reductase reaction, this 2-ketoacid undergoes a metal-dependent reduction by NADPH to yield (R)-2,3-dihydroxy-isovalerate.</text>
</comment>
<comment type="catalytic activity">
    <reaction evidence="1">
        <text>(2R)-2,3-dihydroxy-3-methylbutanoate + NADP(+) = (2S)-2-acetolactate + NADPH + H(+)</text>
        <dbReference type="Rhea" id="RHEA:22068"/>
        <dbReference type="ChEBI" id="CHEBI:15378"/>
        <dbReference type="ChEBI" id="CHEBI:49072"/>
        <dbReference type="ChEBI" id="CHEBI:57783"/>
        <dbReference type="ChEBI" id="CHEBI:58349"/>
        <dbReference type="ChEBI" id="CHEBI:58476"/>
        <dbReference type="EC" id="1.1.1.86"/>
    </reaction>
</comment>
<comment type="catalytic activity">
    <reaction evidence="1">
        <text>(2R,3R)-2,3-dihydroxy-3-methylpentanoate + NADP(+) = (S)-2-ethyl-2-hydroxy-3-oxobutanoate + NADPH + H(+)</text>
        <dbReference type="Rhea" id="RHEA:13493"/>
        <dbReference type="ChEBI" id="CHEBI:15378"/>
        <dbReference type="ChEBI" id="CHEBI:49256"/>
        <dbReference type="ChEBI" id="CHEBI:49258"/>
        <dbReference type="ChEBI" id="CHEBI:57783"/>
        <dbReference type="ChEBI" id="CHEBI:58349"/>
        <dbReference type="EC" id="1.1.1.86"/>
    </reaction>
</comment>
<comment type="cofactor">
    <cofactor evidence="1">
        <name>Mg(2+)</name>
        <dbReference type="ChEBI" id="CHEBI:18420"/>
    </cofactor>
    <text evidence="1">Binds 2 magnesium ions per subunit.</text>
</comment>
<comment type="pathway">
    <text evidence="1">Amino-acid biosynthesis; L-isoleucine biosynthesis; L-isoleucine from 2-oxobutanoate: step 2/4.</text>
</comment>
<comment type="pathway">
    <text evidence="1">Amino-acid biosynthesis; L-valine biosynthesis; L-valine from pyruvate: step 2/4.</text>
</comment>
<comment type="similarity">
    <text evidence="1">Belongs to the ketol-acid reductoisomerase family.</text>
</comment>
<organism>
    <name type="scientific">Mycolicibacterium gilvum (strain PYR-GCK)</name>
    <name type="common">Mycobacterium gilvum (strain PYR-GCK)</name>
    <dbReference type="NCBI Taxonomy" id="350054"/>
    <lineage>
        <taxon>Bacteria</taxon>
        <taxon>Bacillati</taxon>
        <taxon>Actinomycetota</taxon>
        <taxon>Actinomycetes</taxon>
        <taxon>Mycobacteriales</taxon>
        <taxon>Mycobacteriaceae</taxon>
        <taxon>Mycolicibacterium</taxon>
    </lineage>
</organism>
<reference key="1">
    <citation type="submission" date="2007-04" db="EMBL/GenBank/DDBJ databases">
        <title>Complete sequence of chromosome of Mycobacterium gilvum PYR-GCK.</title>
        <authorList>
            <consortium name="US DOE Joint Genome Institute"/>
            <person name="Copeland A."/>
            <person name="Lucas S."/>
            <person name="Lapidus A."/>
            <person name="Barry K."/>
            <person name="Detter J.C."/>
            <person name="Glavina del Rio T."/>
            <person name="Hammon N."/>
            <person name="Israni S."/>
            <person name="Dalin E."/>
            <person name="Tice H."/>
            <person name="Pitluck S."/>
            <person name="Chain P."/>
            <person name="Malfatti S."/>
            <person name="Shin M."/>
            <person name="Vergez L."/>
            <person name="Schmutz J."/>
            <person name="Larimer F."/>
            <person name="Land M."/>
            <person name="Hauser L."/>
            <person name="Kyrpides N."/>
            <person name="Mikhailova N."/>
            <person name="Miller C."/>
            <person name="Richardson P."/>
        </authorList>
    </citation>
    <scope>NUCLEOTIDE SEQUENCE [LARGE SCALE GENOMIC DNA]</scope>
    <source>
        <strain>PYR-GCK</strain>
    </source>
</reference>
<accession>A4TE07</accession>
<dbReference type="EC" id="1.1.1.86" evidence="1"/>
<dbReference type="EMBL" id="CP000656">
    <property type="protein sequence ID" value="ABP46706.1"/>
    <property type="molecule type" value="Genomic_DNA"/>
</dbReference>
<dbReference type="SMR" id="A4TE07"/>
<dbReference type="STRING" id="350054.Mflv_4237"/>
<dbReference type="KEGG" id="mgi:Mflv_4237"/>
<dbReference type="eggNOG" id="COG0059">
    <property type="taxonomic scope" value="Bacteria"/>
</dbReference>
<dbReference type="HOGENOM" id="CLU_033821_0_1_11"/>
<dbReference type="OrthoDB" id="9804088at2"/>
<dbReference type="UniPathway" id="UPA00047">
    <property type="reaction ID" value="UER00056"/>
</dbReference>
<dbReference type="UniPathway" id="UPA00049">
    <property type="reaction ID" value="UER00060"/>
</dbReference>
<dbReference type="GO" id="GO:0005829">
    <property type="term" value="C:cytosol"/>
    <property type="evidence" value="ECO:0007669"/>
    <property type="project" value="TreeGrafter"/>
</dbReference>
<dbReference type="GO" id="GO:0004455">
    <property type="term" value="F:ketol-acid reductoisomerase activity"/>
    <property type="evidence" value="ECO:0007669"/>
    <property type="project" value="UniProtKB-UniRule"/>
</dbReference>
<dbReference type="GO" id="GO:0000287">
    <property type="term" value="F:magnesium ion binding"/>
    <property type="evidence" value="ECO:0007669"/>
    <property type="project" value="UniProtKB-UniRule"/>
</dbReference>
<dbReference type="GO" id="GO:0050661">
    <property type="term" value="F:NADP binding"/>
    <property type="evidence" value="ECO:0007669"/>
    <property type="project" value="InterPro"/>
</dbReference>
<dbReference type="GO" id="GO:0009097">
    <property type="term" value="P:isoleucine biosynthetic process"/>
    <property type="evidence" value="ECO:0007669"/>
    <property type="project" value="UniProtKB-UniRule"/>
</dbReference>
<dbReference type="GO" id="GO:0009099">
    <property type="term" value="P:L-valine biosynthetic process"/>
    <property type="evidence" value="ECO:0007669"/>
    <property type="project" value="UniProtKB-UniRule"/>
</dbReference>
<dbReference type="FunFam" id="3.40.50.720:FF:000023">
    <property type="entry name" value="Ketol-acid reductoisomerase (NADP(+))"/>
    <property type="match status" value="1"/>
</dbReference>
<dbReference type="Gene3D" id="6.10.240.10">
    <property type="match status" value="1"/>
</dbReference>
<dbReference type="Gene3D" id="3.40.50.720">
    <property type="entry name" value="NAD(P)-binding Rossmann-like Domain"/>
    <property type="match status" value="1"/>
</dbReference>
<dbReference type="HAMAP" id="MF_00435">
    <property type="entry name" value="IlvC"/>
    <property type="match status" value="1"/>
</dbReference>
<dbReference type="InterPro" id="IPR008927">
    <property type="entry name" value="6-PGluconate_DH-like_C_sf"/>
</dbReference>
<dbReference type="InterPro" id="IPR013023">
    <property type="entry name" value="KARI"/>
</dbReference>
<dbReference type="InterPro" id="IPR000506">
    <property type="entry name" value="KARI_C"/>
</dbReference>
<dbReference type="InterPro" id="IPR013116">
    <property type="entry name" value="KARI_N"/>
</dbReference>
<dbReference type="InterPro" id="IPR014359">
    <property type="entry name" value="KARI_prok"/>
</dbReference>
<dbReference type="InterPro" id="IPR036291">
    <property type="entry name" value="NAD(P)-bd_dom_sf"/>
</dbReference>
<dbReference type="NCBIfam" id="TIGR00465">
    <property type="entry name" value="ilvC"/>
    <property type="match status" value="1"/>
</dbReference>
<dbReference type="NCBIfam" id="NF004017">
    <property type="entry name" value="PRK05479.1"/>
    <property type="match status" value="1"/>
</dbReference>
<dbReference type="PANTHER" id="PTHR21371">
    <property type="entry name" value="KETOL-ACID REDUCTOISOMERASE, MITOCHONDRIAL"/>
    <property type="match status" value="1"/>
</dbReference>
<dbReference type="PANTHER" id="PTHR21371:SF1">
    <property type="entry name" value="KETOL-ACID REDUCTOISOMERASE, MITOCHONDRIAL"/>
    <property type="match status" value="1"/>
</dbReference>
<dbReference type="Pfam" id="PF01450">
    <property type="entry name" value="KARI_C"/>
    <property type="match status" value="1"/>
</dbReference>
<dbReference type="Pfam" id="PF07991">
    <property type="entry name" value="KARI_N"/>
    <property type="match status" value="1"/>
</dbReference>
<dbReference type="PIRSF" id="PIRSF000116">
    <property type="entry name" value="IlvC_gammaproteo"/>
    <property type="match status" value="1"/>
</dbReference>
<dbReference type="SUPFAM" id="SSF48179">
    <property type="entry name" value="6-phosphogluconate dehydrogenase C-terminal domain-like"/>
    <property type="match status" value="1"/>
</dbReference>
<dbReference type="SUPFAM" id="SSF51735">
    <property type="entry name" value="NAD(P)-binding Rossmann-fold domains"/>
    <property type="match status" value="1"/>
</dbReference>
<dbReference type="PROSITE" id="PS51851">
    <property type="entry name" value="KARI_C"/>
    <property type="match status" value="1"/>
</dbReference>
<dbReference type="PROSITE" id="PS51850">
    <property type="entry name" value="KARI_N"/>
    <property type="match status" value="1"/>
</dbReference>
<keyword id="KW-0028">Amino-acid biosynthesis</keyword>
<keyword id="KW-0100">Branched-chain amino acid biosynthesis</keyword>
<keyword id="KW-0460">Magnesium</keyword>
<keyword id="KW-0479">Metal-binding</keyword>
<keyword id="KW-0521">NADP</keyword>
<keyword id="KW-0560">Oxidoreductase</keyword>
<feature type="chain" id="PRO_1000080634" description="Ketol-acid reductoisomerase (NADP(+))">
    <location>
        <begin position="1"/>
        <end position="337"/>
    </location>
</feature>
<feature type="domain" description="KARI N-terminal Rossmann" evidence="2">
    <location>
        <begin position="3"/>
        <end position="183"/>
    </location>
</feature>
<feature type="domain" description="KARI C-terminal knotted" evidence="3">
    <location>
        <begin position="184"/>
        <end position="329"/>
    </location>
</feature>
<feature type="active site" evidence="1">
    <location>
        <position position="109"/>
    </location>
</feature>
<feature type="binding site" evidence="1">
    <location>
        <begin position="26"/>
        <end position="29"/>
    </location>
    <ligand>
        <name>NADP(+)</name>
        <dbReference type="ChEBI" id="CHEBI:58349"/>
    </ligand>
</feature>
<feature type="binding site" evidence="1">
    <location>
        <position position="49"/>
    </location>
    <ligand>
        <name>NADP(+)</name>
        <dbReference type="ChEBI" id="CHEBI:58349"/>
    </ligand>
</feature>
<feature type="binding site" evidence="1">
    <location>
        <position position="52"/>
    </location>
    <ligand>
        <name>NADP(+)</name>
        <dbReference type="ChEBI" id="CHEBI:58349"/>
    </ligand>
</feature>
<feature type="binding site" evidence="1">
    <location>
        <position position="54"/>
    </location>
    <ligand>
        <name>NADP(+)</name>
        <dbReference type="ChEBI" id="CHEBI:58349"/>
    </ligand>
</feature>
<feature type="binding site" evidence="1">
    <location>
        <begin position="84"/>
        <end position="87"/>
    </location>
    <ligand>
        <name>NADP(+)</name>
        <dbReference type="ChEBI" id="CHEBI:58349"/>
    </ligand>
</feature>
<feature type="binding site" evidence="1">
    <location>
        <position position="135"/>
    </location>
    <ligand>
        <name>NADP(+)</name>
        <dbReference type="ChEBI" id="CHEBI:58349"/>
    </ligand>
</feature>
<feature type="binding site" evidence="1">
    <location>
        <position position="192"/>
    </location>
    <ligand>
        <name>Mg(2+)</name>
        <dbReference type="ChEBI" id="CHEBI:18420"/>
        <label>1</label>
    </ligand>
</feature>
<feature type="binding site" evidence="1">
    <location>
        <position position="192"/>
    </location>
    <ligand>
        <name>Mg(2+)</name>
        <dbReference type="ChEBI" id="CHEBI:18420"/>
        <label>2</label>
    </ligand>
</feature>
<feature type="binding site" evidence="1">
    <location>
        <position position="196"/>
    </location>
    <ligand>
        <name>Mg(2+)</name>
        <dbReference type="ChEBI" id="CHEBI:18420"/>
        <label>1</label>
    </ligand>
</feature>
<feature type="binding site" evidence="1">
    <location>
        <position position="228"/>
    </location>
    <ligand>
        <name>Mg(2+)</name>
        <dbReference type="ChEBI" id="CHEBI:18420"/>
        <label>2</label>
    </ligand>
</feature>
<feature type="binding site" evidence="1">
    <location>
        <position position="232"/>
    </location>
    <ligand>
        <name>Mg(2+)</name>
        <dbReference type="ChEBI" id="CHEBI:18420"/>
        <label>2</label>
    </ligand>
</feature>
<feature type="binding site" evidence="1">
    <location>
        <position position="253"/>
    </location>
    <ligand>
        <name>substrate</name>
    </ligand>
</feature>
<name>ILVC_MYCGI</name>
<protein>
    <recommendedName>
        <fullName evidence="1">Ketol-acid reductoisomerase (NADP(+))</fullName>
        <shortName evidence="1">KARI</shortName>
        <ecNumber evidence="1">1.1.1.86</ecNumber>
    </recommendedName>
    <alternativeName>
        <fullName evidence="1">Acetohydroxy-acid isomeroreductase</fullName>
        <shortName evidence="1">AHIR</shortName>
    </alternativeName>
    <alternativeName>
        <fullName evidence="1">Alpha-keto-beta-hydroxylacyl reductoisomerase</fullName>
    </alternativeName>
    <alternativeName>
        <fullName evidence="1">Ketol-acid reductoisomerase type 1</fullName>
    </alternativeName>
    <alternativeName>
        <fullName evidence="1">Ketol-acid reductoisomerase type I</fullName>
    </alternativeName>
</protein>
<gene>
    <name evidence="1" type="primary">ilvC</name>
    <name type="ordered locus">Mflv_4237</name>
</gene>
<sequence>MAVEMFYDADADLSIIQGRKVAVIGYGSQGHAHSLSLRDSGVEVKVGLKEGSKSRDKVTEQGLDVDTPAEVAKWADVIMLLAPDTAQAEIFTKDIEPNLEDGNALFFGHGLNIHFGLIKPPANVTIGMVAPKGPGHLVRRQFVDGKGVPCLIAVDQDPKGEGQALALSYAAAIGGARAGVIKTTFKDETETDLFGEQAVLCGGTEELVKTGFDVMVEAGYEPELAYFEVLHELKLIVDLMYEGGIARMNYSVSDTAEFGGYLSGPRVIDADTKKRMQDILKDIQDGTFVKRLVANVEGGNKELEGLRKQNAEHPIEVTGKKLRDLMSWVDRPITETA</sequence>
<proteinExistence type="inferred from homology"/>